<organism>
    <name type="scientific">Arabidopsis thaliana</name>
    <name type="common">Mouse-ear cress</name>
    <dbReference type="NCBI Taxonomy" id="3702"/>
    <lineage>
        <taxon>Eukaryota</taxon>
        <taxon>Viridiplantae</taxon>
        <taxon>Streptophyta</taxon>
        <taxon>Embryophyta</taxon>
        <taxon>Tracheophyta</taxon>
        <taxon>Spermatophyta</taxon>
        <taxon>Magnoliopsida</taxon>
        <taxon>eudicotyledons</taxon>
        <taxon>Gunneridae</taxon>
        <taxon>Pentapetalae</taxon>
        <taxon>rosids</taxon>
        <taxon>malvids</taxon>
        <taxon>Brassicales</taxon>
        <taxon>Brassicaceae</taxon>
        <taxon>Camelineae</taxon>
        <taxon>Arabidopsis</taxon>
    </lineage>
</organism>
<gene>
    <name type="primary">CYP71B37</name>
    <name type="ordered locus">At3g26330</name>
    <name type="ORF">F20C19.5</name>
</gene>
<comment type="cofactor">
    <cofactor evidence="1">
        <name>heme</name>
        <dbReference type="ChEBI" id="CHEBI:30413"/>
    </cofactor>
</comment>
<comment type="subcellular location">
    <subcellularLocation>
        <location evidence="3">Membrane</location>
        <topology evidence="3">Single-pass membrane protein</topology>
    </subcellularLocation>
</comment>
<comment type="similarity">
    <text evidence="3">Belongs to the cytochrome P450 family.</text>
</comment>
<comment type="sequence caution" evidence="3">
    <conflict type="erroneous gene model prediction">
        <sequence resource="EMBL-CDS" id="BAB02193"/>
    </conflict>
</comment>
<name>C71BY_ARATH</name>
<feature type="chain" id="PRO_0000052111" description="Cytochrome P450 71B37">
    <location>
        <begin position="1"/>
        <end position="500"/>
    </location>
</feature>
<feature type="transmembrane region" description="Helical" evidence="2">
    <location>
        <begin position="2"/>
        <end position="22"/>
    </location>
</feature>
<feature type="binding site" description="axial binding residue" evidence="1">
    <location>
        <position position="440"/>
    </location>
    <ligand>
        <name>heme</name>
        <dbReference type="ChEBI" id="CHEBI:30413"/>
    </ligand>
    <ligandPart>
        <name>Fe</name>
        <dbReference type="ChEBI" id="CHEBI:18248"/>
    </ligandPart>
</feature>
<proteinExistence type="inferred from homology"/>
<sequence>MATIWFLPLLFLSCLLLAALRLKKRRQHQRKPPSPPGFPIIGNLHQLGELPHQSLWSLSKKYGPVMLLKFGSIPTVVVSSSETAKQALKIHDLNCCSRPSLAGPRALSYNYLDIVFSPFNDYWKELRRMCVQELFSPKQVHLIQPIREEEVKKLMNSFSESAAQKTPVNLSEKLASLTVGVICKAAFGVSFQGTVLNSDNFDKLIHDAFLFLGSFSASDYFPNVGWIIDWLTGLQGQRERSVRGLDAFYEQMFDLHKQGNKEGVEDFVDLLLKLEKEETVLGYGKLTRNHIKAVLMNVLLGGIGTSAITMTWAMTELMRNPRVMKKVQSEIRNQIGGKSMICLDDIDQLHYLKMVINETWRLHPPAPLLVPREVMSEFEINGYTIPAKTRLYVNVWGIGRDPDTWKDPEEFLPERFVNSNIDAKGQNFELLPFGSGRRMCPAMYMGTTMVEFGLANLLYHFDWKLPEGMVVEDIDMEESPGLNASKKNELVLVPRKYLNL</sequence>
<keyword id="KW-0349">Heme</keyword>
<keyword id="KW-0408">Iron</keyword>
<keyword id="KW-0472">Membrane</keyword>
<keyword id="KW-0479">Metal-binding</keyword>
<keyword id="KW-0503">Monooxygenase</keyword>
<keyword id="KW-0560">Oxidoreductase</keyword>
<keyword id="KW-1185">Reference proteome</keyword>
<keyword id="KW-0812">Transmembrane</keyword>
<keyword id="KW-1133">Transmembrane helix</keyword>
<accession>Q9LIP3</accession>
<reference key="1">
    <citation type="journal article" date="2000" name="DNA Res.">
        <title>Structural analysis of Arabidopsis thaliana chromosome 3. II. Sequence features of the 4,251,695 bp regions covered by 90 P1, TAC and BAC clones.</title>
        <authorList>
            <person name="Kaneko T."/>
            <person name="Katoh T."/>
            <person name="Sato S."/>
            <person name="Nakamura Y."/>
            <person name="Asamizu E."/>
            <person name="Tabata S."/>
        </authorList>
    </citation>
    <scope>NUCLEOTIDE SEQUENCE [LARGE SCALE GENOMIC DNA]</scope>
    <source>
        <strain>cv. Columbia</strain>
    </source>
</reference>
<reference key="2">
    <citation type="journal article" date="2017" name="Plant J.">
        <title>Araport11: a complete reannotation of the Arabidopsis thaliana reference genome.</title>
        <authorList>
            <person name="Cheng C.Y."/>
            <person name="Krishnakumar V."/>
            <person name="Chan A.P."/>
            <person name="Thibaud-Nissen F."/>
            <person name="Schobel S."/>
            <person name="Town C.D."/>
        </authorList>
    </citation>
    <scope>GENOME REANNOTATION</scope>
    <source>
        <strain>cv. Columbia</strain>
    </source>
</reference>
<reference key="3">
    <citation type="unpublished observations" date="2001-04">
        <authorList>
            <person name="Bak S."/>
            <person name="Paquette S."/>
        </authorList>
    </citation>
    <scope>CONCEPTUAL TRANSLATION</scope>
</reference>
<evidence type="ECO:0000250" key="1"/>
<evidence type="ECO:0000255" key="2"/>
<evidence type="ECO:0000305" key="3"/>
<protein>
    <recommendedName>
        <fullName>Cytochrome P450 71B37</fullName>
        <ecNumber>1.14.-.-</ecNumber>
    </recommendedName>
</protein>
<dbReference type="EC" id="1.14.-.-"/>
<dbReference type="EMBL" id="AP001298">
    <property type="protein sequence ID" value="BAB02193.1"/>
    <property type="status" value="ALT_SEQ"/>
    <property type="molecule type" value="Genomic_DNA"/>
</dbReference>
<dbReference type="EMBL" id="CP002686">
    <property type="protein sequence ID" value="AEE77146.1"/>
    <property type="molecule type" value="Genomic_DNA"/>
</dbReference>
<dbReference type="RefSeq" id="NP_189264.3">
    <property type="nucleotide sequence ID" value="NM_113540.5"/>
</dbReference>
<dbReference type="SMR" id="Q9LIP3"/>
<dbReference type="FunCoup" id="Q9LIP3">
    <property type="interactions" value="568"/>
</dbReference>
<dbReference type="STRING" id="3702.Q9LIP3"/>
<dbReference type="PaxDb" id="3702-AT3G26330.1"/>
<dbReference type="ProteomicsDB" id="240567"/>
<dbReference type="EnsemblPlants" id="AT3G26330.1">
    <property type="protein sequence ID" value="AT3G26330.1"/>
    <property type="gene ID" value="AT3G26330"/>
</dbReference>
<dbReference type="GeneID" id="822237"/>
<dbReference type="Gramene" id="AT3G26330.1">
    <property type="protein sequence ID" value="AT3G26330.1"/>
    <property type="gene ID" value="AT3G26330"/>
</dbReference>
<dbReference type="KEGG" id="ath:AT3G26330"/>
<dbReference type="Araport" id="AT3G26330"/>
<dbReference type="TAIR" id="AT3G26330">
    <property type="gene designation" value="CYP71B37"/>
</dbReference>
<dbReference type="eggNOG" id="KOG0156">
    <property type="taxonomic scope" value="Eukaryota"/>
</dbReference>
<dbReference type="HOGENOM" id="CLU_001570_4_1_1"/>
<dbReference type="InParanoid" id="Q9LIP3"/>
<dbReference type="OMA" id="FNDYWKE"/>
<dbReference type="PhylomeDB" id="Q9LIP3"/>
<dbReference type="BioCyc" id="ARA:AT3G26330-MONOMER"/>
<dbReference type="PRO" id="PR:Q9LIP3"/>
<dbReference type="Proteomes" id="UP000006548">
    <property type="component" value="Chromosome 3"/>
</dbReference>
<dbReference type="ExpressionAtlas" id="Q9LIP3">
    <property type="expression patterns" value="baseline and differential"/>
</dbReference>
<dbReference type="GO" id="GO:0016020">
    <property type="term" value="C:membrane"/>
    <property type="evidence" value="ECO:0007669"/>
    <property type="project" value="UniProtKB-SubCell"/>
</dbReference>
<dbReference type="GO" id="GO:0020037">
    <property type="term" value="F:heme binding"/>
    <property type="evidence" value="ECO:0007669"/>
    <property type="project" value="InterPro"/>
</dbReference>
<dbReference type="GO" id="GO:0005506">
    <property type="term" value="F:iron ion binding"/>
    <property type="evidence" value="ECO:0007669"/>
    <property type="project" value="InterPro"/>
</dbReference>
<dbReference type="GO" id="GO:0004497">
    <property type="term" value="F:monooxygenase activity"/>
    <property type="evidence" value="ECO:0007669"/>
    <property type="project" value="UniProtKB-KW"/>
</dbReference>
<dbReference type="GO" id="GO:0016705">
    <property type="term" value="F:oxidoreductase activity, acting on paired donors, with incorporation or reduction of molecular oxygen"/>
    <property type="evidence" value="ECO:0007669"/>
    <property type="project" value="InterPro"/>
</dbReference>
<dbReference type="CDD" id="cd11072">
    <property type="entry name" value="CYP71-like"/>
    <property type="match status" value="1"/>
</dbReference>
<dbReference type="FunFam" id="1.10.630.10:FF:000011">
    <property type="entry name" value="Cytochrome P450 83B1"/>
    <property type="match status" value="1"/>
</dbReference>
<dbReference type="Gene3D" id="1.10.630.10">
    <property type="entry name" value="Cytochrome P450"/>
    <property type="match status" value="1"/>
</dbReference>
<dbReference type="InterPro" id="IPR001128">
    <property type="entry name" value="Cyt_P450"/>
</dbReference>
<dbReference type="InterPro" id="IPR017972">
    <property type="entry name" value="Cyt_P450_CS"/>
</dbReference>
<dbReference type="InterPro" id="IPR002401">
    <property type="entry name" value="Cyt_P450_E_grp-I"/>
</dbReference>
<dbReference type="InterPro" id="IPR036396">
    <property type="entry name" value="Cyt_P450_sf"/>
</dbReference>
<dbReference type="PANTHER" id="PTHR47955:SF19">
    <property type="entry name" value="CYTOCHROME P450 71A9-LIKE ISOFORM X1"/>
    <property type="match status" value="1"/>
</dbReference>
<dbReference type="PANTHER" id="PTHR47955">
    <property type="entry name" value="CYTOCHROME P450 FAMILY 71 PROTEIN"/>
    <property type="match status" value="1"/>
</dbReference>
<dbReference type="Pfam" id="PF00067">
    <property type="entry name" value="p450"/>
    <property type="match status" value="1"/>
</dbReference>
<dbReference type="PRINTS" id="PR00463">
    <property type="entry name" value="EP450I"/>
</dbReference>
<dbReference type="PRINTS" id="PR00385">
    <property type="entry name" value="P450"/>
</dbReference>
<dbReference type="SUPFAM" id="SSF48264">
    <property type="entry name" value="Cytochrome P450"/>
    <property type="match status" value="1"/>
</dbReference>
<dbReference type="PROSITE" id="PS00086">
    <property type="entry name" value="CYTOCHROME_P450"/>
    <property type="match status" value="1"/>
</dbReference>